<dbReference type="EMBL" id="CP003059">
    <property type="protein sequence ID" value="AEP36533.1"/>
    <property type="molecule type" value="Genomic_DNA"/>
</dbReference>
<dbReference type="RefSeq" id="WP_014111430.1">
    <property type="nucleotide sequence ID" value="NC_016043.1"/>
</dbReference>
<dbReference type="SMR" id="G4Q9J6"/>
<dbReference type="STRING" id="1008459.TASI_0762"/>
<dbReference type="KEGG" id="tas:TASI_0762"/>
<dbReference type="eggNOG" id="COG1520">
    <property type="taxonomic scope" value="Bacteria"/>
</dbReference>
<dbReference type="HOGENOM" id="CLU_027480_0_1_4"/>
<dbReference type="OrthoDB" id="5173551at2"/>
<dbReference type="Proteomes" id="UP000009284">
    <property type="component" value="Chromosome"/>
</dbReference>
<dbReference type="GO" id="GO:0009279">
    <property type="term" value="C:cell outer membrane"/>
    <property type="evidence" value="ECO:0007669"/>
    <property type="project" value="UniProtKB-SubCell"/>
</dbReference>
<dbReference type="GO" id="GO:0043165">
    <property type="term" value="P:Gram-negative-bacterium-type cell outer membrane assembly"/>
    <property type="evidence" value="ECO:0007669"/>
    <property type="project" value="UniProtKB-UniRule"/>
</dbReference>
<dbReference type="GO" id="GO:0051205">
    <property type="term" value="P:protein insertion into membrane"/>
    <property type="evidence" value="ECO:0007669"/>
    <property type="project" value="UniProtKB-UniRule"/>
</dbReference>
<dbReference type="Gene3D" id="2.130.10.10">
    <property type="entry name" value="YVTN repeat-like/Quinoprotein amine dehydrogenase"/>
    <property type="match status" value="1"/>
</dbReference>
<dbReference type="HAMAP" id="MF_00923">
    <property type="entry name" value="OM_assembly_BamB"/>
    <property type="match status" value="1"/>
</dbReference>
<dbReference type="InterPro" id="IPR017687">
    <property type="entry name" value="BamB"/>
</dbReference>
<dbReference type="InterPro" id="IPR018391">
    <property type="entry name" value="PQQ_b-propeller_rpt"/>
</dbReference>
<dbReference type="InterPro" id="IPR002372">
    <property type="entry name" value="PQQ_rpt_dom"/>
</dbReference>
<dbReference type="InterPro" id="IPR011047">
    <property type="entry name" value="Quinoprotein_ADH-like_sf"/>
</dbReference>
<dbReference type="InterPro" id="IPR015943">
    <property type="entry name" value="WD40/YVTN_repeat-like_dom_sf"/>
</dbReference>
<dbReference type="NCBIfam" id="TIGR03300">
    <property type="entry name" value="assembly_YfgL"/>
    <property type="match status" value="1"/>
</dbReference>
<dbReference type="PANTHER" id="PTHR34512">
    <property type="entry name" value="CELL SURFACE PROTEIN"/>
    <property type="match status" value="1"/>
</dbReference>
<dbReference type="PANTHER" id="PTHR34512:SF30">
    <property type="entry name" value="OUTER MEMBRANE PROTEIN ASSEMBLY FACTOR BAMB"/>
    <property type="match status" value="1"/>
</dbReference>
<dbReference type="Pfam" id="PF13360">
    <property type="entry name" value="PQQ_2"/>
    <property type="match status" value="1"/>
</dbReference>
<dbReference type="SMART" id="SM00564">
    <property type="entry name" value="PQQ"/>
    <property type="match status" value="6"/>
</dbReference>
<dbReference type="SUPFAM" id="SSF50998">
    <property type="entry name" value="Quinoprotein alcohol dehydrogenase-like"/>
    <property type="match status" value="1"/>
</dbReference>
<dbReference type="PROSITE" id="PS51257">
    <property type="entry name" value="PROKAR_LIPOPROTEIN"/>
    <property type="match status" value="1"/>
</dbReference>
<sequence>MKLTLKRKFIAVLALTSLLGACSLFKNERRFEPAKLADIKQSIVVNTVWQTSIGSGGSAGFAPVYADNSIFAATPDGTVVRVNAENGNIAWSTKLDTKLTSGVGVGDGLVIVTDRKAKAYALNAQTGEKVWDTELSTISTMPPIAGFGKVIVRADDFRVQAFDSKDGKLHWSFVRTNPILSLKTNSRMALINNAVIVAVPTGKLVSLNLNDGTVNWEIHSASAKGPSDIDSVTDVVGQPLVFNDGVCTSSYQGNITCYSIKNSRLTPVWFEPFSSAVGLGYDNNIIYGASIDGTVAAFSLANGQIAWSDQTLINRGLTNPVVYQNYLYVGDLDGLIHVYDTKSGSLVGRFSVGSSKDIVSPLLPTDKGVVVQNGSGTLMLIRAN</sequence>
<accession>G4Q9J6</accession>
<organism>
    <name type="scientific">Taylorella asinigenitalis (strain MCE3)</name>
    <dbReference type="NCBI Taxonomy" id="1008459"/>
    <lineage>
        <taxon>Bacteria</taxon>
        <taxon>Pseudomonadati</taxon>
        <taxon>Pseudomonadota</taxon>
        <taxon>Betaproteobacteria</taxon>
        <taxon>Burkholderiales</taxon>
        <taxon>Alcaligenaceae</taxon>
        <taxon>Taylorella</taxon>
    </lineage>
</organism>
<gene>
    <name evidence="1" type="primary">bamB</name>
    <name type="ordered locus">TASI_0762</name>
</gene>
<evidence type="ECO:0000255" key="1">
    <source>
        <dbReference type="HAMAP-Rule" id="MF_00923"/>
    </source>
</evidence>
<comment type="function">
    <text evidence="1">Part of the outer membrane protein assembly complex, which is involved in assembly and insertion of beta-barrel proteins into the outer membrane.</text>
</comment>
<comment type="subunit">
    <text evidence="1">Part of the Bam complex.</text>
</comment>
<comment type="subcellular location">
    <subcellularLocation>
        <location evidence="1">Cell outer membrane</location>
        <topology evidence="1">Lipid-anchor</topology>
    </subcellularLocation>
</comment>
<comment type="similarity">
    <text evidence="1">Belongs to the BamB family.</text>
</comment>
<keyword id="KW-0998">Cell outer membrane</keyword>
<keyword id="KW-0449">Lipoprotein</keyword>
<keyword id="KW-0472">Membrane</keyword>
<keyword id="KW-0564">Palmitate</keyword>
<keyword id="KW-1185">Reference proteome</keyword>
<keyword id="KW-0732">Signal</keyword>
<name>BAMB_TAYAM</name>
<reference key="1">
    <citation type="journal article" date="2012" name="PLoS ONE">
        <title>Genomic characterization of the taylorella genus.</title>
        <authorList>
            <person name="Hebert L."/>
            <person name="Moumen B."/>
            <person name="Pons N."/>
            <person name="Duquesne F."/>
            <person name="Breuil M.F."/>
            <person name="Goux D."/>
            <person name="Batto J.M."/>
            <person name="Laugier C."/>
            <person name="Renault P."/>
            <person name="Petry S."/>
        </authorList>
    </citation>
    <scope>NUCLEOTIDE SEQUENCE [LARGE SCALE GENOMIC DNA]</scope>
    <source>
        <strain>MCE3</strain>
    </source>
</reference>
<feature type="signal peptide" evidence="1">
    <location>
        <begin position="1"/>
        <end position="21"/>
    </location>
</feature>
<feature type="chain" id="PRO_0000417690" description="Outer membrane protein assembly factor BamB">
    <location>
        <begin position="22"/>
        <end position="384"/>
    </location>
</feature>
<feature type="lipid moiety-binding region" description="N-palmitoyl cysteine" evidence="1">
    <location>
        <position position="22"/>
    </location>
</feature>
<feature type="lipid moiety-binding region" description="S-diacylglycerol cysteine" evidence="1">
    <location>
        <position position="22"/>
    </location>
</feature>
<protein>
    <recommendedName>
        <fullName evidence="1">Outer membrane protein assembly factor BamB</fullName>
    </recommendedName>
</protein>
<proteinExistence type="inferred from homology"/>